<reference key="1">
    <citation type="journal article" date="1992" name="J. Bacteriol.">
        <title>A new nylon oligomer degradation gene (nylC) on plasmid pOAD2 of Flavobacterium sp.</title>
        <authorList>
            <person name="Kakudo S."/>
            <person name="Negoro S."/>
            <person name="Urabe I."/>
            <person name="Okada H."/>
        </authorList>
    </citation>
    <scope>NUCLEOTIDE SEQUENCE [GENOMIC DNA]</scope>
    <source>
        <strain>K172</strain>
        <plasmid>pOAD2</plasmid>
    </source>
</reference>
<reference key="2">
    <citation type="journal article" date="1995" name="Microbiology">
        <title>A plasmid encoding enzymes for nylon oligomer degradation: nucleotide sequence and analysis of pOAD2.</title>
        <authorList>
            <person name="Kato K."/>
            <person name="Ohtsuki K."/>
            <person name="Koda Y."/>
            <person name="Maekawa T."/>
            <person name="Yomo T."/>
            <person name="Negoro S."/>
            <person name="Urabe I."/>
        </authorList>
    </citation>
    <scope>NUCLEOTIDE SEQUENCE [GENOMIC DNA]</scope>
    <source>
        <strain>KI723T1</strain>
        <plasmid>pOAD2</plasmid>
    </source>
</reference>
<reference key="3">
    <citation type="journal article" date="1993" name="Appl. Environ. Microbiol.">
        <title>Nylon oligomer degradation gene, nylC, on plasmid pOAD2 from a Flavobacterium strain encodes endo-type 6-aminohexanoate oligomer hydrolase: purification and characterization of the nylC gene product.</title>
        <authorList>
            <person name="Kakudo S."/>
            <person name="Negoro S."/>
            <person name="Urabe I."/>
            <person name="Okada H."/>
        </authorList>
    </citation>
    <scope>PROTEIN SEQUENCE OF 1-6 AND 267-271</scope>
    <scope>FUNCTION</scope>
    <scope>CATALYTIC ACTIVITY</scope>
    <scope>PATHWAY</scope>
    <scope>PROTEOLYTIC PROCESSING</scope>
    <source>
        <strain>K172</strain>
        <plasmid>pOAD2</plasmid>
    </source>
</reference>
<reference key="4">
    <citation type="journal article" date="2007" name="Appl. Environ. Microbiol.">
        <title>6-Aminohexanoate oligomer hydrolases from the alkalophilic bacteria Agromyces sp. strain KY5R and Kocuria sp. strain KY2.</title>
        <authorList>
            <person name="Yasuhira K."/>
            <person name="Tanaka Y."/>
            <person name="Shibata H."/>
            <person name="Kawashima Y."/>
            <person name="Ohara A."/>
            <person name="Kato D."/>
            <person name="Takeo M."/>
            <person name="Negoro S."/>
        </authorList>
    </citation>
    <scope>FUNCTION</scope>
    <scope>CATALYTIC ACTIVITY</scope>
    <scope>BIOPHYSICOCHEMICAL PROPERTIES</scope>
    <scope>PATHWAY</scope>
    <source>
        <plasmid>pOAD2</plasmid>
    </source>
</reference>
<reference key="5">
    <citation type="journal article" date="2012" name="J. Biol. Chem.">
        <title>Three-dimensional structure of nylon hydrolase and mechanism of nylon-6 hydrolysis.</title>
        <authorList>
            <person name="Negoro S."/>
            <person name="Shibata N."/>
            <person name="Tanaka Y."/>
            <person name="Yasuhira K."/>
            <person name="Shibata H."/>
            <person name="Hashimoto H."/>
            <person name="Lee Y.H."/>
            <person name="Oshima S."/>
            <person name="Santa R."/>
            <person name="Oshima S."/>
            <person name="Mochiji K."/>
            <person name="Goto Y."/>
            <person name="Ikegami T."/>
            <person name="Nagai K."/>
            <person name="Kato D."/>
            <person name="Takeo M."/>
            <person name="Higuchi Y."/>
        </authorList>
    </citation>
    <scope>MUTAGENESIS OF GLY-111; ASP-122; HIS-130 AND LEU-137</scope>
    <source>
        <plasmid>pOAD2</plasmid>
    </source>
</reference>
<reference key="6">
    <citation type="journal article" date="2013" name="Acta Crystallogr. F">
        <title>Crystallization and X-ray diffraction analysis of nylon hydrolase (NylC) from Arthrobacter sp. KI72.</title>
        <authorList>
            <person name="Nagai K."/>
            <person name="Yasuhira K."/>
            <person name="Tanaka Y."/>
            <person name="Kato D."/>
            <person name="Takeo M."/>
            <person name="Higuchi Y."/>
            <person name="Negoro S."/>
            <person name="Shibata N."/>
        </authorList>
    </citation>
    <scope>CRYSTALLIZATION</scope>
    <source>
        <strain>K172</strain>
        <plasmid>pOAD2</plasmid>
    </source>
</reference>
<reference evidence="10 11 12 13 14 15 16 17" key="7">
    <citation type="journal article" date="2018" name="Sci. Rep.">
        <title>Structural basis of the correct subunit assembly, aggregation, and intracellular degradation of nylon hydrolase.</title>
        <authorList>
            <person name="Negoro S."/>
            <person name="Shibata N."/>
            <person name="Lee Y.H."/>
            <person name="Takehara I."/>
            <person name="Kinugasa R."/>
            <person name="Nagai K."/>
            <person name="Tanaka Y."/>
            <person name="Kato D.I."/>
            <person name="Takeo M."/>
            <person name="Goto Y."/>
            <person name="Higuchi Y."/>
        </authorList>
    </citation>
    <scope>X-RAY CRYSTALLOGRAPHY (1.03 ANGSTROMS) OF WILD-TYPE AND MUTANTS</scope>
    <scope>SUBUNIT</scope>
    <scope>PROTEOLYTIC PROCESSING</scope>
    <scope>ACTIVE SITE</scope>
    <scope>MUTAGENESIS OF ASP-122</scope>
    <source>
        <plasmid>pOAD2</plasmid>
    </source>
</reference>
<protein>
    <recommendedName>
        <fullName evidence="8">6-aminohexanoate-oligomer endohydrolase</fullName>
        <ecNumber evidence="1 4">3.5.1.117</ecNumber>
    </recommendedName>
    <alternativeName>
        <fullName evidence="6">6-aminohexanoate oligomer hydrolase</fullName>
    </alternativeName>
    <alternativeName>
        <fullName evidence="6">Ahx endo-type-oligomer hydrolase</fullName>
    </alternativeName>
    <alternativeName>
        <fullName evidence="7">Nylon hydrolase</fullName>
    </alternativeName>
    <alternativeName>
        <fullName evidence="5">Nylon oligomer-degrading enzyme EIII</fullName>
    </alternativeName>
    <alternativeName>
        <fullName evidence="7">Nylonase</fullName>
    </alternativeName>
    <component>
        <recommendedName>
            <fullName evidence="8">6-aminohexanoate-oligomer endohydrolase alpha subunit</fullName>
        </recommendedName>
    </component>
    <component>
        <recommendedName>
            <fullName evidence="8">6-aminohexanoate-oligomer endohydrolase beta subunit</fullName>
        </recommendedName>
    </component>
</protein>
<comment type="function">
    <text evidence="1 4">Involved in the degradation of nylon-6 oligomers (PubMed:17827307, PubMed:8285701). Degrades cyclic and linear oligomers of 6-aminohexanoate (Ahx) with a degree of polymerization greater than three by an endo-type mode (PubMed:17827307, PubMed:8285701). Cannot use Ahx cyclic dimer or the Ahx linear dimer (PubMed:17827307).</text>
</comment>
<comment type="catalytic activity">
    <reaction evidence="1 4">
        <text>[N-(6-aminohexanoyl)]n + H2O = [N-(6-aminohexanoyl)]n-x + [N-(6-aminohexanoyl)]x.</text>
        <dbReference type="EC" id="3.5.1.117"/>
    </reaction>
</comment>
<comment type="biophysicochemical properties">
    <kinetics>
        <KM evidence="1">3.7 mg/ml for Ahx cyclic-oligomer</KM>
        <text evidence="1">kcat is 6.5 sec(-1) with Ahx cyclic-oligomer as substrate.</text>
    </kinetics>
    <phDependence>
        <text evidence="1">Optimum pH is 6.5-7.5.</text>
    </phDependence>
</comment>
<comment type="pathway">
    <text evidence="1 4">Xenobiotic degradation; nylon-6 oligomer degradation.</text>
</comment>
<comment type="subunit">
    <text evidence="3">Heterotetramer composed of 4 alpha/beta heterodimers (PubMed:29950566). Exists at the monomer/dimer/trimer equilibrium in aqueous solution (PubMed:29950566).</text>
</comment>
<comment type="PTM">
    <text evidence="3 4">Expressed as an inactive precursor that is cleaved autocatalytically at Asn266/Thr267 to generate an active enzyme composed of an alpha subunit and a beta subunit.</text>
</comment>
<comment type="similarity">
    <text evidence="8">Belongs to the peptidase S58 family.</text>
</comment>
<proteinExistence type="evidence at protein level"/>
<accession>Q79F77</accession>
<accession>A0A493R6J6</accession>
<accession>Q57326</accession>
<sequence>MNTTPVHALTDIDGGIAVDPAPRLAGPPVFGGPGNDAFDLAPVRSTGREMLRFDFPGVSIGAAHYEEGPTGATVIHIPAGARTAVDARGGAVGLSGGYDFNHAICLAGGAGYGLEAGAGVSDALLERLEHRTGFAELQLVSSAVIYDFSARSTAVYPDKALGRAALEFAVPGEFPQGRAGAGMSASAGKVDWDRTEITGQGAAFRRLGDVRILAVVVPNPVGVIVDRAGTVVRGNYDAQTGVRRHPVFDYQEAFAEQVPPVTEAGNTTISAIVTNVRMSPVELNQFAKQVHSSMHRGIQPFHTDMDGDTLFAVTTDEIDLPTTPGSSRGRLSVNATALGAIASEVMWDAVLEAGK</sequence>
<name>NYLC_PAEUR</name>
<gene>
    <name evidence="5" type="primary">nylC</name>
</gene>
<dbReference type="EC" id="3.5.1.117" evidence="1 4"/>
<dbReference type="EMBL" id="D10686">
    <property type="protein sequence ID" value="BAA01528.1"/>
    <property type="molecule type" value="Genomic_DNA"/>
</dbReference>
<dbReference type="EMBL" id="D26094">
    <property type="protein sequence ID" value="BAA05088.1"/>
    <property type="molecule type" value="Genomic_DNA"/>
</dbReference>
<dbReference type="PIR" id="A47039">
    <property type="entry name" value="A47039"/>
</dbReference>
<dbReference type="RefSeq" id="WP_012476895.1">
    <property type="nucleotide sequence ID" value="NZ_BDMH01000051.1"/>
</dbReference>
<dbReference type="PDB" id="5XYG">
    <property type="method" value="X-ray"/>
    <property type="resolution" value="1.60 A"/>
    <property type="chains" value="A/B=1-355"/>
</dbReference>
<dbReference type="PDB" id="5XYO">
    <property type="method" value="X-ray"/>
    <property type="resolution" value="2.00 A"/>
    <property type="chains" value="A/B=1-355"/>
</dbReference>
<dbReference type="PDB" id="5XYP">
    <property type="method" value="X-ray"/>
    <property type="resolution" value="1.20 A"/>
    <property type="chains" value="A/B=1-355"/>
</dbReference>
<dbReference type="PDB" id="5XYQ">
    <property type="method" value="X-ray"/>
    <property type="resolution" value="1.10 A"/>
    <property type="chains" value="A/B=1-355"/>
</dbReference>
<dbReference type="PDB" id="5XYS">
    <property type="method" value="X-ray"/>
    <property type="resolution" value="1.05 A"/>
    <property type="chains" value="A/B=1-355"/>
</dbReference>
<dbReference type="PDB" id="5XYT">
    <property type="method" value="X-ray"/>
    <property type="resolution" value="1.90 A"/>
    <property type="chains" value="A/B=1-355"/>
</dbReference>
<dbReference type="PDB" id="5Y0L">
    <property type="method" value="X-ray"/>
    <property type="resolution" value="1.39 A"/>
    <property type="chains" value="A/B=1-355"/>
</dbReference>
<dbReference type="PDB" id="5Y0M">
    <property type="method" value="X-ray"/>
    <property type="resolution" value="1.03 A"/>
    <property type="chains" value="A/B=1-355"/>
</dbReference>
<dbReference type="PDB" id="7YU0">
    <property type="method" value="X-ray"/>
    <property type="resolution" value="1.35 A"/>
    <property type="chains" value="A/B=1-355"/>
</dbReference>
<dbReference type="PDB" id="7YU1">
    <property type="method" value="X-ray"/>
    <property type="resolution" value="1.13 A"/>
    <property type="chains" value="A/B=1-355"/>
</dbReference>
<dbReference type="PDB" id="7YU2">
    <property type="method" value="X-ray"/>
    <property type="resolution" value="1.21 A"/>
    <property type="chains" value="A/B=1-355"/>
</dbReference>
<dbReference type="PDBsum" id="5XYG"/>
<dbReference type="PDBsum" id="5XYO"/>
<dbReference type="PDBsum" id="5XYP"/>
<dbReference type="PDBsum" id="5XYQ"/>
<dbReference type="PDBsum" id="5XYS"/>
<dbReference type="PDBsum" id="5XYT"/>
<dbReference type="PDBsum" id="5Y0L"/>
<dbReference type="PDBsum" id="5Y0M"/>
<dbReference type="PDBsum" id="7YU0"/>
<dbReference type="PDBsum" id="7YU1"/>
<dbReference type="PDBsum" id="7YU2"/>
<dbReference type="SMR" id="Q79F77"/>
<dbReference type="MEROPS" id="P01.102"/>
<dbReference type="KEGG" id="ag:BAA05088"/>
<dbReference type="BRENDA" id="3.5.1.117">
    <property type="organism ID" value="2302"/>
</dbReference>
<dbReference type="UniPathway" id="UPA00207"/>
<dbReference type="GO" id="GO:0004177">
    <property type="term" value="F:aminopeptidase activity"/>
    <property type="evidence" value="ECO:0007669"/>
    <property type="project" value="TreeGrafter"/>
</dbReference>
<dbReference type="GO" id="GO:0019876">
    <property type="term" value="P:nylon catabolic process"/>
    <property type="evidence" value="ECO:0000314"/>
    <property type="project" value="UniProtKB"/>
</dbReference>
<dbReference type="CDD" id="cd00123">
    <property type="entry name" value="DmpA_OAT"/>
    <property type="match status" value="1"/>
</dbReference>
<dbReference type="Gene3D" id="3.60.70.12">
    <property type="entry name" value="L-amino peptidase D-ALA esterase/amidase"/>
    <property type="match status" value="1"/>
</dbReference>
<dbReference type="InterPro" id="IPR016117">
    <property type="entry name" value="ArgJ-like_dom_sf"/>
</dbReference>
<dbReference type="InterPro" id="IPR005321">
    <property type="entry name" value="Peptidase_S58_DmpA"/>
</dbReference>
<dbReference type="PANTHER" id="PTHR36512:SF3">
    <property type="entry name" value="BLR5678 PROTEIN"/>
    <property type="match status" value="1"/>
</dbReference>
<dbReference type="PANTHER" id="PTHR36512">
    <property type="entry name" value="D-AMINOPEPTIDASE"/>
    <property type="match status" value="1"/>
</dbReference>
<dbReference type="Pfam" id="PF03576">
    <property type="entry name" value="Peptidase_S58"/>
    <property type="match status" value="1"/>
</dbReference>
<dbReference type="SUPFAM" id="SSF56266">
    <property type="entry name" value="DmpA/ArgJ-like"/>
    <property type="match status" value="1"/>
</dbReference>
<geneLocation type="plasmid">
    <name>pOAD2</name>
</geneLocation>
<feature type="chain" id="PRO_0000452354" description="6-aminohexanoate-oligomer endohydrolase alpha subunit" evidence="8">
    <location>
        <begin position="1"/>
        <end position="266"/>
    </location>
</feature>
<feature type="chain" id="PRO_0000452355" description="6-aminohexanoate-oligomer endohydrolase beta subunit" evidence="8">
    <location>
        <begin position="267"/>
        <end position="355"/>
    </location>
</feature>
<feature type="active site" description="Nucleophile" evidence="9">
    <location>
        <position position="267"/>
    </location>
</feature>
<feature type="mutagenesis site" description="Decreases thermostability by about 10 degrees Celsius." evidence="2">
    <original>G</original>
    <variation>S</variation>
    <location>
        <position position="111"/>
    </location>
</feature>
<feature type="mutagenesis site" description="Increases thermostability by 24 degrees Celsius. Increases thermostability by 29 degrees Celsius; when associated with Y-130." evidence="2">
    <original>D</original>
    <variation>G</variation>
    <location>
        <position position="122"/>
    </location>
</feature>
<feature type="mutagenesis site" description="Increases thermostability by 23 degrees Celsius." evidence="3">
    <original>D</original>
    <variation>K</variation>
    <variation>R</variation>
    <location>
        <position position="122"/>
    </location>
</feature>
<feature type="mutagenesis site" description="Increases thermostability by 13 degrees Celsius." evidence="3">
    <original>D</original>
    <variation>L</variation>
    <location>
        <position position="122"/>
    </location>
</feature>
<feature type="mutagenesis site" description="Increases thermostability by 18 degrees Celsius." evidence="3">
    <original>D</original>
    <variation>N</variation>
    <location>
        <position position="122"/>
    </location>
</feature>
<feature type="mutagenesis site" description="Increases thermostability by 19 degrees Celsius." evidence="3">
    <original>D</original>
    <variation>Q</variation>
    <location>
        <position position="122"/>
    </location>
</feature>
<feature type="mutagenesis site" description="Increases thermostability by 30 degrees Celsius." evidence="3">
    <original>D</original>
    <variation>V</variation>
    <location>
        <position position="122"/>
    </location>
</feature>
<feature type="mutagenesis site" description="Increases thermostability by 11 degrees Celsius. Increases thermostability by 29 degrees Celsius; when associated with G-122." evidence="2">
    <original>H</original>
    <variation>Y</variation>
    <location>
        <position position="130"/>
    </location>
</feature>
<feature type="mutagenesis site" description="Decreases thermostability by about 10 degrees Celsius." evidence="2">
    <original>L</original>
    <variation>A</variation>
    <location>
        <position position="137"/>
    </location>
</feature>
<feature type="helix" evidence="18">
    <location>
        <begin position="9"/>
        <end position="11"/>
    </location>
</feature>
<feature type="helix" evidence="21">
    <location>
        <begin position="35"/>
        <end position="37"/>
    </location>
</feature>
<feature type="strand" evidence="21">
    <location>
        <begin position="48"/>
        <end position="52"/>
    </location>
</feature>
<feature type="strand" evidence="21">
    <location>
        <begin position="59"/>
        <end position="65"/>
    </location>
</feature>
<feature type="turn" evidence="21">
    <location>
        <begin position="66"/>
        <end position="69"/>
    </location>
</feature>
<feature type="strand" evidence="21">
    <location>
        <begin position="70"/>
        <end position="87"/>
    </location>
</feature>
<feature type="strand" evidence="20">
    <location>
        <begin position="89"/>
        <end position="91"/>
    </location>
</feature>
<feature type="strand" evidence="18">
    <location>
        <begin position="94"/>
        <end position="96"/>
    </location>
</feature>
<feature type="strand" evidence="21">
    <location>
        <begin position="99"/>
        <end position="109"/>
    </location>
</feature>
<feature type="helix" evidence="21">
    <location>
        <begin position="110"/>
        <end position="114"/>
    </location>
</feature>
<feature type="helix" evidence="21">
    <location>
        <begin position="115"/>
        <end position="127"/>
    </location>
</feature>
<feature type="turn" evidence="21">
    <location>
        <begin position="128"/>
        <end position="130"/>
    </location>
</feature>
<feature type="helix" evidence="21">
    <location>
        <begin position="134"/>
        <end position="136"/>
    </location>
</feature>
<feature type="strand" evidence="21">
    <location>
        <begin position="140"/>
        <end position="144"/>
    </location>
</feature>
<feature type="helix" evidence="20">
    <location>
        <begin position="148"/>
        <end position="150"/>
    </location>
</feature>
<feature type="helix" evidence="21">
    <location>
        <begin position="159"/>
        <end position="167"/>
    </location>
</feature>
<feature type="strand" evidence="21">
    <location>
        <begin position="173"/>
        <end position="179"/>
    </location>
</feature>
<feature type="helix" evidence="21">
    <location>
        <begin position="180"/>
        <end position="182"/>
    </location>
</feature>
<feature type="helix" evidence="21">
    <location>
        <begin position="192"/>
        <end position="194"/>
    </location>
</feature>
<feature type="strand" evidence="21">
    <location>
        <begin position="200"/>
        <end position="207"/>
    </location>
</feature>
<feature type="strand" evidence="21">
    <location>
        <begin position="210"/>
        <end position="218"/>
    </location>
</feature>
<feature type="strand" evidence="21">
    <location>
        <begin position="221"/>
        <end position="225"/>
    </location>
</feature>
<feature type="strand" evidence="21">
    <location>
        <begin position="231"/>
        <end position="234"/>
    </location>
</feature>
<feature type="turn" evidence="21">
    <location>
        <begin position="238"/>
        <end position="240"/>
    </location>
</feature>
<feature type="strand" evidence="19">
    <location>
        <begin position="241"/>
        <end position="243"/>
    </location>
</feature>
<feature type="helix" evidence="21">
    <location>
        <begin position="246"/>
        <end position="257"/>
    </location>
</feature>
<feature type="strand" evidence="21">
    <location>
        <begin position="268"/>
        <end position="276"/>
    </location>
</feature>
<feature type="helix" evidence="21">
    <location>
        <begin position="280"/>
        <end position="293"/>
    </location>
</feature>
<feature type="turn" evidence="21">
    <location>
        <begin position="294"/>
        <end position="297"/>
    </location>
</feature>
<feature type="strand" evidence="21">
    <location>
        <begin position="298"/>
        <end position="300"/>
    </location>
</feature>
<feature type="strand" evidence="21">
    <location>
        <begin position="309"/>
        <end position="318"/>
    </location>
</feature>
<feature type="helix" evidence="21">
    <location>
        <begin position="335"/>
        <end position="354"/>
    </location>
</feature>
<evidence type="ECO:0000269" key="1">
    <source>
    </source>
</evidence>
<evidence type="ECO:0000269" key="2">
    <source>
    </source>
</evidence>
<evidence type="ECO:0000269" key="3">
    <source>
    </source>
</evidence>
<evidence type="ECO:0000269" key="4">
    <source>
    </source>
</evidence>
<evidence type="ECO:0000303" key="5">
    <source>
    </source>
</evidence>
<evidence type="ECO:0000303" key="6">
    <source>
    </source>
</evidence>
<evidence type="ECO:0000303" key="7">
    <source>
    </source>
</evidence>
<evidence type="ECO:0000305" key="8"/>
<evidence type="ECO:0000305" key="9">
    <source>
    </source>
</evidence>
<evidence type="ECO:0007744" key="10">
    <source>
        <dbReference type="PDB" id="5XYG"/>
    </source>
</evidence>
<evidence type="ECO:0007744" key="11">
    <source>
        <dbReference type="PDB" id="5XYO"/>
    </source>
</evidence>
<evidence type="ECO:0007744" key="12">
    <source>
        <dbReference type="PDB" id="5XYP"/>
    </source>
</evidence>
<evidence type="ECO:0007744" key="13">
    <source>
        <dbReference type="PDB" id="5XYQ"/>
    </source>
</evidence>
<evidence type="ECO:0007744" key="14">
    <source>
        <dbReference type="PDB" id="5XYS"/>
    </source>
</evidence>
<evidence type="ECO:0007744" key="15">
    <source>
        <dbReference type="PDB" id="5XYT"/>
    </source>
</evidence>
<evidence type="ECO:0007744" key="16">
    <source>
        <dbReference type="PDB" id="5Y0L"/>
    </source>
</evidence>
<evidence type="ECO:0007744" key="17">
    <source>
        <dbReference type="PDB" id="5Y0M"/>
    </source>
</evidence>
<evidence type="ECO:0007829" key="18">
    <source>
        <dbReference type="PDB" id="5XYG"/>
    </source>
</evidence>
<evidence type="ECO:0007829" key="19">
    <source>
        <dbReference type="PDB" id="5XYQ"/>
    </source>
</evidence>
<evidence type="ECO:0007829" key="20">
    <source>
        <dbReference type="PDB" id="5XYS"/>
    </source>
</evidence>
<evidence type="ECO:0007829" key="21">
    <source>
        <dbReference type="PDB" id="5Y0M"/>
    </source>
</evidence>
<keyword id="KW-0002">3D-structure</keyword>
<keyword id="KW-0903">Direct protein sequencing</keyword>
<keyword id="KW-0378">Hydrolase</keyword>
<keyword id="KW-0549">Nylon degradation</keyword>
<keyword id="KW-0614">Plasmid</keyword>
<organism>
    <name type="scientific">Paenarthrobacter ureafaciens</name>
    <dbReference type="NCBI Taxonomy" id="37931"/>
    <lineage>
        <taxon>Bacteria</taxon>
        <taxon>Bacillati</taxon>
        <taxon>Actinomycetota</taxon>
        <taxon>Actinomycetes</taxon>
        <taxon>Micrococcales</taxon>
        <taxon>Micrococcaceae</taxon>
        <taxon>Paenarthrobacter</taxon>
    </lineage>
</organism>